<gene>
    <name type="primary">OMT8</name>
</gene>
<reference key="1">
    <citation type="journal article" date="2010" name="Plant Physiol.">
        <title>Herbivore-induced SABATH methyltransferases of maize that methylate anthranilic acid using s-adenosyl-L-methionine.</title>
        <authorList>
            <person name="Kollner T.G."/>
            <person name="Lenk C."/>
            <person name="Zhao N."/>
            <person name="Seidl-Adams I."/>
            <person name="Gershenzon J."/>
            <person name="Chen F."/>
            <person name="Degenhardt J."/>
        </authorList>
    </citation>
    <scope>NUCLEOTIDE SEQUENCE [MRNA]</scope>
    <scope>FUNCTION</scope>
    <scope>CATALYTIC ACTIVITY</scope>
    <source>
        <strain>cv. Delprim</strain>
    </source>
</reference>
<dbReference type="EC" id="2.1.1.273"/>
<dbReference type="EMBL" id="HM242248">
    <property type="protein sequence ID" value="ADI87453.1"/>
    <property type="molecule type" value="mRNA"/>
</dbReference>
<dbReference type="RefSeq" id="NP_001182139.1">
    <property type="nucleotide sequence ID" value="NM_001195210.1"/>
</dbReference>
<dbReference type="SMR" id="D9J101"/>
<dbReference type="STRING" id="4577.D9J101"/>
<dbReference type="PaxDb" id="4577-GRMZM2G126772_P01"/>
<dbReference type="GeneID" id="113604963"/>
<dbReference type="eggNOG" id="ENOG502QQVK">
    <property type="taxonomic scope" value="Eukaryota"/>
</dbReference>
<dbReference type="InParanoid" id="D9J101"/>
<dbReference type="Proteomes" id="UP000007305">
    <property type="component" value="Unplaced"/>
</dbReference>
<dbReference type="ExpressionAtlas" id="D9J101">
    <property type="expression patterns" value="baseline and differential"/>
</dbReference>
<dbReference type="GO" id="GO:0046872">
    <property type="term" value="F:metal ion binding"/>
    <property type="evidence" value="ECO:0007669"/>
    <property type="project" value="UniProtKB-KW"/>
</dbReference>
<dbReference type="GO" id="GO:0080150">
    <property type="term" value="F:S-adenosyl-L-methionine:benzoic acid carboxyl methyl transferase activity"/>
    <property type="evidence" value="ECO:0007669"/>
    <property type="project" value="RHEA"/>
</dbReference>
<dbReference type="GO" id="GO:0008757">
    <property type="term" value="F:S-adenosylmethionine-dependent methyltransferase activity"/>
    <property type="evidence" value="ECO:0000318"/>
    <property type="project" value="GO_Central"/>
</dbReference>
<dbReference type="GO" id="GO:0006952">
    <property type="term" value="P:defense response"/>
    <property type="evidence" value="ECO:0007669"/>
    <property type="project" value="UniProtKB-KW"/>
</dbReference>
<dbReference type="GO" id="GO:0032259">
    <property type="term" value="P:methylation"/>
    <property type="evidence" value="ECO:0000318"/>
    <property type="project" value="GO_Central"/>
</dbReference>
<dbReference type="Gene3D" id="1.10.1200.270">
    <property type="entry name" value="Methyltransferase, alpha-helical capping domain"/>
    <property type="match status" value="1"/>
</dbReference>
<dbReference type="Gene3D" id="3.40.50.150">
    <property type="entry name" value="Vaccinia Virus protein VP39"/>
    <property type="match status" value="1"/>
</dbReference>
<dbReference type="InterPro" id="IPR005299">
    <property type="entry name" value="MeTrfase_7"/>
</dbReference>
<dbReference type="InterPro" id="IPR042086">
    <property type="entry name" value="MeTrfase_capping"/>
</dbReference>
<dbReference type="InterPro" id="IPR029063">
    <property type="entry name" value="SAM-dependent_MTases_sf"/>
</dbReference>
<dbReference type="PANTHER" id="PTHR31009">
    <property type="entry name" value="S-ADENOSYL-L-METHIONINE:CARBOXYL METHYLTRANSFERASE FAMILY PROTEIN"/>
    <property type="match status" value="1"/>
</dbReference>
<dbReference type="Pfam" id="PF03492">
    <property type="entry name" value="Methyltransf_7"/>
    <property type="match status" value="1"/>
</dbReference>
<dbReference type="SUPFAM" id="SSF53335">
    <property type="entry name" value="S-adenosyl-L-methionine-dependent methyltransferases"/>
    <property type="match status" value="1"/>
</dbReference>
<comment type="function">
    <text evidence="5">Methyltransferase involved in the biosynthesis of methyl benzoate in response to stresses. Utilizes exclusively benzoic acid (BA) as substrate.</text>
</comment>
<comment type="catalytic activity">
    <reaction evidence="5">
        <text>benzoate + S-adenosyl-L-methionine = methyl benzoate + S-adenosyl-L-homocysteine</text>
        <dbReference type="Rhea" id="RHEA:36099"/>
        <dbReference type="ChEBI" id="CHEBI:16150"/>
        <dbReference type="ChEBI" id="CHEBI:57856"/>
        <dbReference type="ChEBI" id="CHEBI:59789"/>
        <dbReference type="ChEBI" id="CHEBI:72775"/>
        <dbReference type="EC" id="2.1.1.273"/>
    </reaction>
</comment>
<comment type="cofactor">
    <cofactor evidence="1">
        <name>Mg(2+)</name>
        <dbReference type="ChEBI" id="CHEBI:18420"/>
    </cofactor>
</comment>
<comment type="similarity">
    <text evidence="6">Belongs to the methyltransferase superfamily. Type-7 methyltransferase family. SABATH subfamily.</text>
</comment>
<accession>D9J101</accession>
<keyword id="KW-0460">Magnesium</keyword>
<keyword id="KW-0479">Metal-binding</keyword>
<keyword id="KW-0489">Methyltransferase</keyword>
<keyword id="KW-0611">Plant defense</keyword>
<keyword id="KW-1185">Reference proteome</keyword>
<keyword id="KW-0949">S-adenosyl-L-methionine</keyword>
<keyword id="KW-0808">Transferase</keyword>
<proteinExistence type="evidence at protein level"/>
<sequence>MDIRRDFHMAEGEGEWSYSKNCRRQQVAVRETRPMVETAVKQVYAALLPRTMVVADLGCSAGPNTLLFISSVLSSIAAAAAEQCKPPSGGGDDDDHHVELQFVLNDLPGNDFNHLFRSVEEEFRRAAGCERAPHPPYYVMGLPESYYNRLFPRQSVHLFHSSYCLQWRSQEPEGLEAWRKPCLNEDNIYIARTTTPSVAKLFQEQFQKDFSLFLKLRHEELVHGGRMVLIFLGRKNEDVYSGDLNQLFALVATALQSLVLKGLVEKEKLESFNLPVYGPSVGEVEELVTRSGLQFSMDLIKQFEMNWDPFDDSEGDNDVVVVEDSARSSVNVAKLIRSVLKALVVRHFGEAVLDACFAEFRRLVAEHLGKEKTKFTTIAMCLKKE</sequence>
<organism>
    <name type="scientific">Zea mays</name>
    <name type="common">Maize</name>
    <dbReference type="NCBI Taxonomy" id="4577"/>
    <lineage>
        <taxon>Eukaryota</taxon>
        <taxon>Viridiplantae</taxon>
        <taxon>Streptophyta</taxon>
        <taxon>Embryophyta</taxon>
        <taxon>Tracheophyta</taxon>
        <taxon>Spermatophyta</taxon>
        <taxon>Magnoliopsida</taxon>
        <taxon>Liliopsida</taxon>
        <taxon>Poales</taxon>
        <taxon>Poaceae</taxon>
        <taxon>PACMAD clade</taxon>
        <taxon>Panicoideae</taxon>
        <taxon>Andropogonodae</taxon>
        <taxon>Andropogoneae</taxon>
        <taxon>Tripsacinae</taxon>
        <taxon>Zea</taxon>
    </lineage>
</organism>
<feature type="chain" id="PRO_0000423914" description="Benzoate O-methyltransferase">
    <location>
        <begin position="1"/>
        <end position="385"/>
    </location>
</feature>
<feature type="binding site" evidence="3">
    <location>
        <position position="18"/>
    </location>
    <ligand>
        <name>S-adenosyl-L-homocysteine</name>
        <dbReference type="ChEBI" id="CHEBI:57856"/>
    </ligand>
</feature>
<feature type="binding site" evidence="3">
    <location>
        <position position="25"/>
    </location>
    <ligand>
        <name>benzoate</name>
        <dbReference type="ChEBI" id="CHEBI:16150"/>
    </ligand>
</feature>
<feature type="binding site" evidence="3">
    <location>
        <position position="59"/>
    </location>
    <ligand>
        <name>S-adenosyl-L-homocysteine</name>
        <dbReference type="ChEBI" id="CHEBI:57856"/>
    </ligand>
</feature>
<feature type="binding site" evidence="3">
    <location>
        <position position="64"/>
    </location>
    <ligand>
        <name>S-adenosyl-L-homocysteine</name>
        <dbReference type="ChEBI" id="CHEBI:57856"/>
    </ligand>
</feature>
<feature type="binding site" evidence="3">
    <location>
        <position position="106"/>
    </location>
    <ligand>
        <name>S-adenosyl-L-homocysteine</name>
        <dbReference type="ChEBI" id="CHEBI:57856"/>
    </ligand>
</feature>
<feature type="binding site" evidence="2">
    <location>
        <position position="107"/>
    </location>
    <ligand>
        <name>S-adenosyl-L-homocysteine</name>
        <dbReference type="ChEBI" id="CHEBI:57856"/>
    </ligand>
</feature>
<feature type="binding site" evidence="3">
    <location>
        <position position="145"/>
    </location>
    <ligand>
        <name>S-adenosyl-L-homocysteine</name>
        <dbReference type="ChEBI" id="CHEBI:57856"/>
    </ligand>
</feature>
<feature type="binding site" evidence="3">
    <location>
        <position position="146"/>
    </location>
    <ligand>
        <name>S-adenosyl-L-homocysteine</name>
        <dbReference type="ChEBI" id="CHEBI:57856"/>
    </ligand>
</feature>
<feature type="binding site" evidence="3">
    <location>
        <position position="167"/>
    </location>
    <ligand>
        <name>benzoate</name>
        <dbReference type="ChEBI" id="CHEBI:16150"/>
    </ligand>
</feature>
<feature type="binding site" evidence="4">
    <location>
        <position position="184"/>
    </location>
    <ligand>
        <name>Mg(2+)</name>
        <dbReference type="ChEBI" id="CHEBI:18420"/>
    </ligand>
</feature>
<feature type="binding site" evidence="4">
    <location>
        <position position="270"/>
    </location>
    <ligand>
        <name>Mg(2+)</name>
        <dbReference type="ChEBI" id="CHEBI:18420"/>
    </ligand>
</feature>
<feature type="binding site" evidence="4">
    <location>
        <position position="272"/>
    </location>
    <ligand>
        <name>Mg(2+)</name>
        <dbReference type="ChEBI" id="CHEBI:18420"/>
    </ligand>
</feature>
<feature type="binding site" evidence="4">
    <location>
        <position position="273"/>
    </location>
    <ligand>
        <name>Mg(2+)</name>
        <dbReference type="ChEBI" id="CHEBI:18420"/>
    </ligand>
</feature>
<evidence type="ECO:0000250" key="1"/>
<evidence type="ECO:0000250" key="2">
    <source>
        <dbReference type="UniProtKB" id="A0A6C0WW36"/>
    </source>
</evidence>
<evidence type="ECO:0000250" key="3">
    <source>
        <dbReference type="UniProtKB" id="B2KPR3"/>
    </source>
</evidence>
<evidence type="ECO:0000250" key="4">
    <source>
        <dbReference type="UniProtKB" id="Q9FLN8"/>
    </source>
</evidence>
<evidence type="ECO:0000269" key="5">
    <source>
    </source>
</evidence>
<evidence type="ECO:0000305" key="6"/>
<protein>
    <recommendedName>
        <fullName>Benzoate O-methyltransferase</fullName>
        <ecNumber>2.1.1.273</ecNumber>
    </recommendedName>
    <alternativeName>
        <fullName>O-methyltransferase 8</fullName>
    </alternativeName>
</protein>
<name>OMT8_MAIZE</name>